<comment type="function">
    <text evidence="1">Regulator of mitochondrial fusion: acts by forming homo- and heterodimers at the mitochondrial outer membrane and facilitating the formation of pld6/MitoPLD dimers. May act by regulating phospholipid metabolism via pld6/MitoPLD.</text>
</comment>
<comment type="subunit">
    <text evidence="1">Homodimer and heterodimer; forms heterodimers with miga2.</text>
</comment>
<comment type="subcellular location">
    <subcellularLocation>
        <location evidence="1">Mitochondrion outer membrane</location>
        <topology evidence="2">Single-pass membrane protein</topology>
    </subcellularLocation>
</comment>
<comment type="similarity">
    <text evidence="3">Belongs to the mitoguardin family.</text>
</comment>
<gene>
    <name evidence="1" type="primary">miga1</name>
    <name evidence="1" type="synonym">fam73a</name>
</gene>
<organism>
    <name type="scientific">Xenopus laevis</name>
    <name type="common">African clawed frog</name>
    <dbReference type="NCBI Taxonomy" id="8355"/>
    <lineage>
        <taxon>Eukaryota</taxon>
        <taxon>Metazoa</taxon>
        <taxon>Chordata</taxon>
        <taxon>Craniata</taxon>
        <taxon>Vertebrata</taxon>
        <taxon>Euteleostomi</taxon>
        <taxon>Amphibia</taxon>
        <taxon>Batrachia</taxon>
        <taxon>Anura</taxon>
        <taxon>Pipoidea</taxon>
        <taxon>Pipidae</taxon>
        <taxon>Xenopodinae</taxon>
        <taxon>Xenopus</taxon>
        <taxon>Xenopus</taxon>
    </lineage>
</organism>
<sequence>MTETQHIFRLTVHRFMDFPLSIYSSFTQLKPTPGLKKIIAVAAISGVSLIFLACHLKRKRGKKKINAPQTEPGQFILQCSRHVAEKGSSCSSSRQNLTLSLGSIKERGSQSHLNGDLCSKYSGSMQSLASVQSCHSCACINSNSWDKTDEDEINIPVTTPENLYLMGMELFEEALRRWEQALTFRSRQAEDEANCSSIKLGAGDAIAEENIEDVISADFIHKLEALLQRAYRLQEEFEATLGASDPASLANDIDKDTDITVMDNGGDFQQRDTLSIASTDSFLSAAELADNQDMRATCGLDSLYHHALYEEAMQLAEEGKVHCRVLRTEMLECLGDSDFLAKLHCIRQAFQEIILQRENRIFLMGTGRKLLSALIVKARKNPKKFEDAYFDMMSFLEQPESWDTVEKELLSRGMKCMNFYDIVLDFIVMDSLEDLENPPLSIQNVVRNRWLNSSFKETAVTSSCWSVLRQKKQEMKVPNGFFANFYTVCEQLCPVLAWGFLGPRSSLHDLCCFYKAQIMYFLKDIFDFEKVRYSDVEHLAEDIMKCLQRRTELTVVYTGEESARRPPVLN</sequence>
<reference key="1">
    <citation type="submission" date="2004-05" db="EMBL/GenBank/DDBJ databases">
        <authorList>
            <consortium name="NIH - Xenopus Gene Collection (XGC) project"/>
        </authorList>
    </citation>
    <scope>NUCLEOTIDE SEQUENCE [LARGE SCALE MRNA]</scope>
    <source>
        <tissue>Oocyte</tissue>
    </source>
</reference>
<accession>Q6NRB7</accession>
<name>MIGA1_XENLA</name>
<evidence type="ECO:0000250" key="1">
    <source>
        <dbReference type="UniProtKB" id="Q8NAN2"/>
    </source>
</evidence>
<evidence type="ECO:0000255" key="2"/>
<evidence type="ECO:0000305" key="3"/>
<dbReference type="EMBL" id="BC070842">
    <property type="protein sequence ID" value="AAH70842.1"/>
    <property type="molecule type" value="mRNA"/>
</dbReference>
<dbReference type="RefSeq" id="NP_001084810.1">
    <property type="nucleotide sequence ID" value="NM_001091341.1"/>
</dbReference>
<dbReference type="SMR" id="Q6NRB7"/>
<dbReference type="DNASU" id="431851"/>
<dbReference type="AGR" id="Xenbase:XB-GENE-5861525"/>
<dbReference type="Xenbase" id="XB-GENE-5861525">
    <property type="gene designation" value="miga1.L"/>
</dbReference>
<dbReference type="Proteomes" id="UP000186698">
    <property type="component" value="Unplaced"/>
</dbReference>
<dbReference type="Bgee" id="431851">
    <property type="expression patterns" value="Expressed in egg cell and 17 other cell types or tissues"/>
</dbReference>
<dbReference type="GO" id="GO:0005741">
    <property type="term" value="C:mitochondrial outer membrane"/>
    <property type="evidence" value="ECO:0007669"/>
    <property type="project" value="UniProtKB-SubCell"/>
</dbReference>
<dbReference type="GO" id="GO:0005886">
    <property type="term" value="C:plasma membrane"/>
    <property type="evidence" value="ECO:0000250"/>
    <property type="project" value="UniProtKB"/>
</dbReference>
<dbReference type="GO" id="GO:0046982">
    <property type="term" value="F:protein heterodimerization activity"/>
    <property type="evidence" value="ECO:0000250"/>
    <property type="project" value="UniProtKB"/>
</dbReference>
<dbReference type="GO" id="GO:0042803">
    <property type="term" value="F:protein homodimerization activity"/>
    <property type="evidence" value="ECO:0000250"/>
    <property type="project" value="UniProtKB"/>
</dbReference>
<dbReference type="GO" id="GO:0008053">
    <property type="term" value="P:mitochondrial fusion"/>
    <property type="evidence" value="ECO:0000250"/>
    <property type="project" value="UniProtKB"/>
</dbReference>
<dbReference type="InterPro" id="IPR019392">
    <property type="entry name" value="Miga"/>
</dbReference>
<dbReference type="PANTHER" id="PTHR21508">
    <property type="entry name" value="MITOGUARDIN"/>
    <property type="match status" value="1"/>
</dbReference>
<dbReference type="PANTHER" id="PTHR21508:SF3">
    <property type="entry name" value="MITOGUARDIN 1"/>
    <property type="match status" value="1"/>
</dbReference>
<dbReference type="Pfam" id="PF10265">
    <property type="entry name" value="Miga"/>
    <property type="match status" value="1"/>
</dbReference>
<protein>
    <recommendedName>
        <fullName evidence="1">Mitoguardin 1</fullName>
    </recommendedName>
    <alternativeName>
        <fullName evidence="3">Protein FAM73A</fullName>
    </alternativeName>
</protein>
<keyword id="KW-0472">Membrane</keyword>
<keyword id="KW-0496">Mitochondrion</keyword>
<keyword id="KW-1000">Mitochondrion outer membrane</keyword>
<keyword id="KW-1185">Reference proteome</keyword>
<keyword id="KW-0812">Transmembrane</keyword>
<keyword id="KW-1133">Transmembrane helix</keyword>
<feature type="chain" id="PRO_0000285649" description="Mitoguardin 1">
    <location>
        <begin position="1"/>
        <end position="570"/>
    </location>
</feature>
<feature type="transmembrane region" description="Helical" evidence="2">
    <location>
        <begin position="34"/>
        <end position="54"/>
    </location>
</feature>
<proteinExistence type="evidence at transcript level"/>